<sequence>MTVQDKQRQILPLFEHLTSLTRGGLDRTESDVRLRRVGRLPRGTLFSCFHSEHLKEATELYQILYKADSFADFIHLAQQARDIVNEGLFVYSVSVAILHRDDCRGVTVPPIQEIFPDRFVPAETVNQAVKADLKRQSSDEDVLVEIQETGNILDPEHKLAYFREDIGANAHHWHWHIVYPPTWDASVMSKVKDRKGELFYYMHQQMCARYDCDRLSTGLRRMIPFHNFDEKLEGYSPHLTSLVSGLNYASRPAGLHLRDLVDFVDVQDMARWRERLLYSIDIGHVIDHEGQEIPLDAEHGIDVLGALLESSHDSLNDDYYGNLHNSGHVMMARIHDPDGRFRENPGVMSDTSTSLRDPIFYRYHRFIDNIFQEYKATLPCYEKKDLEFSGVEIVNCTVNAKAPNVINTYMKESTLEMSHGISFKGAVKVKYQHLDHDPFTYSISVENTTGDVKHATVRIFLGPTQDELGNRLRLNEQRRFYIELDKFHAELAAGKNTITRKSSESSVTVSHTPTFEELQRGEGVDENTTEFCSCGWPEHLLVPRGTYKGMDFQLFVMLTDYEDDHVGSHNGQTLCADAVSYCGAKDSKYPDKRAMGFPFDRVIKARTVADFRTTNMSFTDVKIQFKDQV</sequence>
<keyword id="KW-0186">Copper</keyword>
<keyword id="KW-1015">Disulfide bond</keyword>
<keyword id="KW-0325">Glycoprotein</keyword>
<keyword id="KW-0479">Metal-binding</keyword>
<keyword id="KW-0561">Oxygen transport</keyword>
<keyword id="KW-0964">Secreted</keyword>
<keyword id="KW-0813">Transport</keyword>
<proteinExistence type="evidence at transcript level"/>
<feature type="initiator methionine" description="Removed" evidence="1">
    <location>
        <position position="1"/>
    </location>
</feature>
<feature type="chain" id="PRO_0000204270" description="Hemocyanin F chain">
    <location>
        <begin position="2"/>
        <end position="629"/>
    </location>
</feature>
<feature type="region of interest" description="Disordered" evidence="3">
    <location>
        <begin position="503"/>
        <end position="522"/>
    </location>
</feature>
<feature type="compositionally biased region" description="Polar residues" evidence="3">
    <location>
        <begin position="503"/>
        <end position="513"/>
    </location>
</feature>
<feature type="binding site" evidence="1">
    <location>
        <position position="172"/>
    </location>
    <ligand>
        <name>Cu cation</name>
        <dbReference type="ChEBI" id="CHEBI:23378"/>
        <label>1</label>
    </ligand>
</feature>
<feature type="binding site" evidence="1">
    <location>
        <position position="176"/>
    </location>
    <ligand>
        <name>Cu cation</name>
        <dbReference type="ChEBI" id="CHEBI:23378"/>
        <label>1</label>
    </ligand>
</feature>
<feature type="binding site" evidence="1">
    <location>
        <position position="203"/>
    </location>
    <ligand>
        <name>Cu cation</name>
        <dbReference type="ChEBI" id="CHEBI:23378"/>
        <label>1</label>
    </ligand>
</feature>
<feature type="binding site" evidence="1">
    <location>
        <position position="324"/>
    </location>
    <ligand>
        <name>Cu cation</name>
        <dbReference type="ChEBI" id="CHEBI:23378"/>
        <label>2</label>
    </ligand>
</feature>
<feature type="binding site" evidence="1">
    <location>
        <position position="328"/>
    </location>
    <ligand>
        <name>Cu cation</name>
        <dbReference type="ChEBI" id="CHEBI:23378"/>
        <label>2</label>
    </ligand>
</feature>
<feature type="binding site" evidence="1">
    <location>
        <position position="364"/>
    </location>
    <ligand>
        <name>Cu cation</name>
        <dbReference type="ChEBI" id="CHEBI:23378"/>
        <label>2</label>
    </ligand>
</feature>
<feature type="glycosylation site" description="N-linked (GlcNAc...) asparagine" evidence="2">
    <location>
        <position position="395"/>
    </location>
</feature>
<feature type="glycosylation site" description="N-linked (GlcNAc...) asparagine" evidence="2">
    <location>
        <position position="447"/>
    </location>
</feature>
<feature type="glycosylation site" description="N-linked (GlcNAc...) asparagine" evidence="2">
    <location>
        <position position="527"/>
    </location>
</feature>
<feature type="glycosylation site" description="N-linked (GlcNAc...) asparagine" evidence="2">
    <location>
        <position position="615"/>
    </location>
</feature>
<feature type="disulfide bond" evidence="1">
    <location>
        <begin position="534"/>
        <end position="582"/>
    </location>
</feature>
<organism>
    <name type="scientific">Aphonopelma sp.</name>
    <name type="common">American tarantula</name>
    <dbReference type="NCBI Taxonomy" id="29932"/>
    <lineage>
        <taxon>Eukaryota</taxon>
        <taxon>Metazoa</taxon>
        <taxon>Ecdysozoa</taxon>
        <taxon>Arthropoda</taxon>
        <taxon>Chelicerata</taxon>
        <taxon>Arachnida</taxon>
        <taxon>Araneae</taxon>
        <taxon>Mygalomorphae</taxon>
        <taxon>Theraphosidae</taxon>
        <taxon>Aphonopelma</taxon>
    </lineage>
</organism>
<protein>
    <recommendedName>
        <fullName>Hemocyanin F chain</fullName>
        <shortName>HcF</shortName>
    </recommendedName>
</protein>
<dbReference type="EMBL" id="AJ277491">
    <property type="protein sequence ID" value="CAB89496.1"/>
    <property type="molecule type" value="mRNA"/>
</dbReference>
<dbReference type="SMR" id="Q9NFL5"/>
<dbReference type="GlyCosmos" id="Q9NFL5">
    <property type="glycosylation" value="4 sites, No reported glycans"/>
</dbReference>
<dbReference type="GO" id="GO:0005576">
    <property type="term" value="C:extracellular region"/>
    <property type="evidence" value="ECO:0007669"/>
    <property type="project" value="UniProtKB-SubCell"/>
</dbReference>
<dbReference type="GO" id="GO:0031404">
    <property type="term" value="F:chloride ion binding"/>
    <property type="evidence" value="ECO:0000250"/>
    <property type="project" value="UniProtKB"/>
</dbReference>
<dbReference type="GO" id="GO:0005507">
    <property type="term" value="F:copper ion binding"/>
    <property type="evidence" value="ECO:0000250"/>
    <property type="project" value="UniProtKB"/>
</dbReference>
<dbReference type="GO" id="GO:0016491">
    <property type="term" value="F:oxidoreductase activity"/>
    <property type="evidence" value="ECO:0007669"/>
    <property type="project" value="InterPro"/>
</dbReference>
<dbReference type="GO" id="GO:0005344">
    <property type="term" value="F:oxygen carrier activity"/>
    <property type="evidence" value="ECO:0007669"/>
    <property type="project" value="UniProtKB-KW"/>
</dbReference>
<dbReference type="FunFam" id="1.10.1280.10:FF:000004">
    <property type="entry name" value="Hemocyanin subunit 2"/>
    <property type="match status" value="1"/>
</dbReference>
<dbReference type="FunFam" id="2.60.40.1520:FF:000001">
    <property type="entry name" value="Hemocyanin subunit 2"/>
    <property type="match status" value="1"/>
</dbReference>
<dbReference type="FunFam" id="1.20.1370.10:FF:000002">
    <property type="entry name" value="Hemocyanin subunit B"/>
    <property type="match status" value="1"/>
</dbReference>
<dbReference type="Gene3D" id="1.10.1280.10">
    <property type="entry name" value="Di-copper center containing domain from catechol oxidase"/>
    <property type="match status" value="1"/>
</dbReference>
<dbReference type="Gene3D" id="2.60.40.1520">
    <property type="entry name" value="Hemocyanin, C-terminal domain"/>
    <property type="match status" value="1"/>
</dbReference>
<dbReference type="Gene3D" id="1.20.1370.10">
    <property type="entry name" value="Hemocyanin, N-terminal domain"/>
    <property type="match status" value="1"/>
</dbReference>
<dbReference type="InterPro" id="IPR008922">
    <property type="entry name" value="Di-copper_centre_dom_sf"/>
</dbReference>
<dbReference type="InterPro" id="IPR013788">
    <property type="entry name" value="Hemocyanin/hexamerin"/>
</dbReference>
<dbReference type="InterPro" id="IPR000896">
    <property type="entry name" value="Hemocyanin/hexamerin_mid_dom"/>
</dbReference>
<dbReference type="InterPro" id="IPR005203">
    <property type="entry name" value="Hemocyanin_C"/>
</dbReference>
<dbReference type="InterPro" id="IPR037020">
    <property type="entry name" value="Hemocyanin_C_sf"/>
</dbReference>
<dbReference type="InterPro" id="IPR005204">
    <property type="entry name" value="Hemocyanin_N"/>
</dbReference>
<dbReference type="InterPro" id="IPR036697">
    <property type="entry name" value="Hemocyanin_N_sf"/>
</dbReference>
<dbReference type="InterPro" id="IPR014756">
    <property type="entry name" value="Ig_E-set"/>
</dbReference>
<dbReference type="InterPro" id="IPR002227">
    <property type="entry name" value="Tyrosinase_Cu-bd"/>
</dbReference>
<dbReference type="PANTHER" id="PTHR11511:SF5">
    <property type="entry name" value="FAT-BODY PROTEIN 1-RELATED"/>
    <property type="match status" value="1"/>
</dbReference>
<dbReference type="PANTHER" id="PTHR11511">
    <property type="entry name" value="LARVAL STORAGE PROTEIN/PHENOLOXIDASE"/>
    <property type="match status" value="1"/>
</dbReference>
<dbReference type="Pfam" id="PF03723">
    <property type="entry name" value="Hemocyanin_C"/>
    <property type="match status" value="1"/>
</dbReference>
<dbReference type="Pfam" id="PF00372">
    <property type="entry name" value="Hemocyanin_M"/>
    <property type="match status" value="1"/>
</dbReference>
<dbReference type="Pfam" id="PF03722">
    <property type="entry name" value="Hemocyanin_N"/>
    <property type="match status" value="1"/>
</dbReference>
<dbReference type="PRINTS" id="PR00187">
    <property type="entry name" value="HAEMOCYANIN"/>
</dbReference>
<dbReference type="SUPFAM" id="SSF48056">
    <property type="entry name" value="Di-copper centre-containing domain"/>
    <property type="match status" value="1"/>
</dbReference>
<dbReference type="SUPFAM" id="SSF81296">
    <property type="entry name" value="E set domains"/>
    <property type="match status" value="1"/>
</dbReference>
<dbReference type="SUPFAM" id="SSF48050">
    <property type="entry name" value="Hemocyanin, N-terminal domain"/>
    <property type="match status" value="1"/>
</dbReference>
<dbReference type="PROSITE" id="PS00209">
    <property type="entry name" value="HEMOCYANIN_1"/>
    <property type="match status" value="1"/>
</dbReference>
<dbReference type="PROSITE" id="PS00210">
    <property type="entry name" value="HEMOCYANIN_2"/>
    <property type="match status" value="1"/>
</dbReference>
<dbReference type="PROSITE" id="PS00498">
    <property type="entry name" value="TYROSINASE_2"/>
    <property type="match status" value="1"/>
</dbReference>
<name>HCYF_APHSP</name>
<reference key="1">
    <citation type="journal article" date="2000" name="J. Biol. Chem.">
        <title>Complete sequence of the 24-mer hemocyanin of the tarantula Eurypelma californicum. Structure and intramolecular evolution of the subunits.</title>
        <authorList>
            <person name="Voit R."/>
            <person name="Feldmaier-Fuchs G."/>
            <person name="Schweikardt T."/>
            <person name="Decker H."/>
            <person name="Burmester T."/>
        </authorList>
    </citation>
    <scope>NUCLEOTIDE SEQUENCE [MRNA]</scope>
    <source>
        <tissue>Heart</tissue>
    </source>
</reference>
<accession>Q9NFL5</accession>
<gene>
    <name type="primary">HCF</name>
</gene>
<comment type="function">
    <text>Hemocyanins are copper-containing oxygen carriers occurring freely dissolved in the hemolymph of many mollusks and arthropods.</text>
</comment>
<comment type="subunit">
    <text>Tarantula hemocyanin is a 24-chain polymer with seven different chains identified.</text>
</comment>
<comment type="subcellular location">
    <subcellularLocation>
        <location>Secreted</location>
        <location>Extracellular space</location>
    </subcellularLocation>
</comment>
<comment type="tissue specificity">
    <text>Hemolymph.</text>
</comment>
<comment type="miscellaneous">
    <text>The two copper ions bound each have 3 nitrogen ligands (presumably contributed by His residues) and share a bridging ligand (possibly contributed by a Tyr residue) in addition to binding oxygen.</text>
</comment>
<comment type="similarity">
    <text evidence="4">Belongs to the tyrosinase family. Hemocyanin subfamily.</text>
</comment>
<evidence type="ECO:0000250" key="1"/>
<evidence type="ECO:0000255" key="2"/>
<evidence type="ECO:0000256" key="3">
    <source>
        <dbReference type="SAM" id="MobiDB-lite"/>
    </source>
</evidence>
<evidence type="ECO:0000305" key="4"/>